<comment type="function">
    <text evidence="3">Involved in meiosis and required for ascospore formation. Involved in substrate recognition in ubiquitin-dependent degradation.</text>
</comment>
<comment type="subunit">
    <text evidence="1">Part of a SCF E3 ubiquitin ligase complex.</text>
</comment>
<comment type="subcellular location">
    <subcellularLocation>
        <location evidence="3">Cytoplasm</location>
    </subcellularLocation>
    <text>In the cytoplasm of ascogenous cells. Within these cells, defined areas that resembled immature ascospores were excluded from the staining.</text>
</comment>
<comment type="tissue specificity">
    <text evidence="3">Specifically expressed in ascus mother cells.</text>
</comment>
<comment type="developmental stage">
    <text evidence="3">Expressed at low levels during hyphal growth in liquid culture. Slightly elevated expression when asexual sporulation is induced. A significant rise can be detected following the developmental sequence of cleistothecia development, which is accompanied by the differentiation of Huelle cells and eventually ascospore formation. This increase coincides with the intermediary phase of the developmental pathway, starting after 72 hours post induction to result in peak levels at approximately 120 hours after the onset of differentiation.</text>
</comment>
<comment type="induction">
    <text evidence="3">During ascospore formation within the cleistothecium.</text>
</comment>
<comment type="sequence caution" evidence="4">
    <conflict type="erroneous gene model prediction">
        <sequence resource="EMBL-CDS" id="EAA59299"/>
    </conflict>
    <text>The predicted gene AN4200 has been split into 2 genes: AN10516 and AN10522.</text>
</comment>
<feature type="chain" id="PRO_0000273528" description="SCF E3 ubiquitin ligase complex F-box protein grrA">
    <location>
        <begin position="1"/>
        <end position="585"/>
    </location>
</feature>
<feature type="domain" description="F-box">
    <location>
        <begin position="65"/>
        <end position="113"/>
    </location>
</feature>
<feature type="repeat" description="LRR 1" evidence="3">
    <location>
        <begin position="147"/>
        <end position="171"/>
    </location>
</feature>
<feature type="repeat" description="LRR 2" evidence="3">
    <location>
        <begin position="172"/>
        <end position="197"/>
    </location>
</feature>
<feature type="repeat" description="LRR 3" evidence="3">
    <location>
        <begin position="198"/>
        <end position="223"/>
    </location>
</feature>
<feature type="repeat" description="LRR 4" evidence="3">
    <location>
        <begin position="224"/>
        <end position="249"/>
    </location>
</feature>
<feature type="repeat" description="LRR 5" evidence="3">
    <location>
        <begin position="250"/>
        <end position="275"/>
    </location>
</feature>
<feature type="repeat" description="LRR 6" evidence="3">
    <location>
        <begin position="276"/>
        <end position="301"/>
    </location>
</feature>
<feature type="repeat" description="LRR 7" evidence="3">
    <location>
        <begin position="302"/>
        <end position="329"/>
    </location>
</feature>
<feature type="repeat" description="LRR 8" evidence="3">
    <location>
        <begin position="330"/>
        <end position="355"/>
    </location>
</feature>
<feature type="repeat" description="LRR 9" evidence="3">
    <location>
        <begin position="356"/>
        <end position="381"/>
    </location>
</feature>
<feature type="repeat" description="LRR 10" evidence="3">
    <location>
        <begin position="382"/>
        <end position="407"/>
    </location>
</feature>
<feature type="repeat" description="LRR 11" evidence="3">
    <location>
        <begin position="408"/>
        <end position="432"/>
    </location>
</feature>
<feature type="repeat" description="LRR 12" evidence="3">
    <location>
        <begin position="433"/>
        <end position="465"/>
    </location>
</feature>
<feature type="repeat" description="LRR 13" evidence="3">
    <location>
        <begin position="466"/>
        <end position="491"/>
    </location>
</feature>
<feature type="region of interest" description="Disordered" evidence="2">
    <location>
        <begin position="1"/>
        <end position="34"/>
    </location>
</feature>
<feature type="region of interest" description="Disordered" evidence="2">
    <location>
        <begin position="41"/>
        <end position="60"/>
    </location>
</feature>
<feature type="compositionally biased region" description="Polar residues" evidence="2">
    <location>
        <begin position="1"/>
        <end position="10"/>
    </location>
</feature>
<feature type="compositionally biased region" description="Low complexity" evidence="2">
    <location>
        <begin position="11"/>
        <end position="25"/>
    </location>
</feature>
<organism>
    <name type="scientific">Emericella nidulans (strain FGSC A4 / ATCC 38163 / CBS 112.46 / NRRL 194 / M139)</name>
    <name type="common">Aspergillus nidulans</name>
    <dbReference type="NCBI Taxonomy" id="227321"/>
    <lineage>
        <taxon>Eukaryota</taxon>
        <taxon>Fungi</taxon>
        <taxon>Dikarya</taxon>
        <taxon>Ascomycota</taxon>
        <taxon>Pezizomycotina</taxon>
        <taxon>Eurotiomycetes</taxon>
        <taxon>Eurotiomycetidae</taxon>
        <taxon>Eurotiales</taxon>
        <taxon>Aspergillaceae</taxon>
        <taxon>Aspergillus</taxon>
        <taxon>Aspergillus subgen. Nidulantes</taxon>
    </lineage>
</organism>
<keyword id="KW-0963">Cytoplasm</keyword>
<keyword id="KW-0433">Leucine-rich repeat</keyword>
<keyword id="KW-0469">Meiosis</keyword>
<keyword id="KW-1185">Reference proteome</keyword>
<keyword id="KW-0677">Repeat</keyword>
<keyword id="KW-0749">Sporulation</keyword>
<keyword id="KW-0833">Ubl conjugation pathway</keyword>
<protein>
    <recommendedName>
        <fullName>SCF E3 ubiquitin ligase complex F-box protein grrA</fullName>
    </recommendedName>
    <alternativeName>
        <fullName>F-box and leucine-rich repeat protein grrA</fullName>
    </alternativeName>
    <alternativeName>
        <fullName>F-box/LRR-repeat protein grrA</fullName>
    </alternativeName>
    <alternativeName>
        <fullName>SCF substrate adapter protein grrA</fullName>
    </alternativeName>
</protein>
<reference key="1">
    <citation type="journal article" date="2006" name="Mol. Microbiol.">
        <title>The Aspergillus nidulans F-box protein GrrA links SCF activity to meiosis.</title>
        <authorList>
            <person name="Krappmann S."/>
            <person name="Jung N."/>
            <person name="Medic B."/>
            <person name="Busch S."/>
            <person name="Prade R.A."/>
            <person name="Braus G.H."/>
        </authorList>
    </citation>
    <scope>NUCLEOTIDE SEQUENCE [GENOMIC DNA]</scope>
    <scope>FUNCTION</scope>
    <scope>SUBCELLULAR LOCATION</scope>
    <scope>TISSUE SPECIFICITY</scope>
    <scope>DEVELOPMENTAL STAGE</scope>
    <scope>INDUCTION</scope>
    <scope>LEUCINE-RICH REPEATS</scope>
</reference>
<reference key="2">
    <citation type="journal article" date="2005" name="Nature">
        <title>Sequencing of Aspergillus nidulans and comparative analysis with A. fumigatus and A. oryzae.</title>
        <authorList>
            <person name="Galagan J.E."/>
            <person name="Calvo S.E."/>
            <person name="Cuomo C."/>
            <person name="Ma L.-J."/>
            <person name="Wortman J.R."/>
            <person name="Batzoglou S."/>
            <person name="Lee S.-I."/>
            <person name="Bastuerkmen M."/>
            <person name="Spevak C.C."/>
            <person name="Clutterbuck J."/>
            <person name="Kapitonov V."/>
            <person name="Jurka J."/>
            <person name="Scazzocchio C."/>
            <person name="Farman M.L."/>
            <person name="Butler J."/>
            <person name="Purcell S."/>
            <person name="Harris S."/>
            <person name="Braus G.H."/>
            <person name="Draht O."/>
            <person name="Busch S."/>
            <person name="D'Enfert C."/>
            <person name="Bouchier C."/>
            <person name="Goldman G.H."/>
            <person name="Bell-Pedersen D."/>
            <person name="Griffiths-Jones S."/>
            <person name="Doonan J.H."/>
            <person name="Yu J."/>
            <person name="Vienken K."/>
            <person name="Pain A."/>
            <person name="Freitag M."/>
            <person name="Selker E.U."/>
            <person name="Archer D.B."/>
            <person name="Penalva M.A."/>
            <person name="Oakley B.R."/>
            <person name="Momany M."/>
            <person name="Tanaka T."/>
            <person name="Kumagai T."/>
            <person name="Asai K."/>
            <person name="Machida M."/>
            <person name="Nierman W.C."/>
            <person name="Denning D.W."/>
            <person name="Caddick M.X."/>
            <person name="Hynes M."/>
            <person name="Paoletti M."/>
            <person name="Fischer R."/>
            <person name="Miller B.L."/>
            <person name="Dyer P.S."/>
            <person name="Sachs M.S."/>
            <person name="Osmani S.A."/>
            <person name="Birren B.W."/>
        </authorList>
    </citation>
    <scope>NUCLEOTIDE SEQUENCE [LARGE SCALE GENOMIC DNA]</scope>
    <source>
        <strain>FGSC A4 / ATCC 38163 / CBS 112.46 / NRRL 194 / M139</strain>
    </source>
</reference>
<reference key="3">
    <citation type="journal article" date="2009" name="Fungal Genet. Biol.">
        <title>The 2008 update of the Aspergillus nidulans genome annotation: a community effort.</title>
        <authorList>
            <person name="Wortman J.R."/>
            <person name="Gilsenan J.M."/>
            <person name="Joardar V."/>
            <person name="Deegan J."/>
            <person name="Clutterbuck J."/>
            <person name="Andersen M.R."/>
            <person name="Archer D."/>
            <person name="Bencina M."/>
            <person name="Braus G."/>
            <person name="Coutinho P."/>
            <person name="von Dohren H."/>
            <person name="Doonan J."/>
            <person name="Driessen A.J."/>
            <person name="Durek P."/>
            <person name="Espeso E."/>
            <person name="Fekete E."/>
            <person name="Flipphi M."/>
            <person name="Estrada C.G."/>
            <person name="Geysens S."/>
            <person name="Goldman G."/>
            <person name="de Groot P.W."/>
            <person name="Hansen K."/>
            <person name="Harris S.D."/>
            <person name="Heinekamp T."/>
            <person name="Helmstaedt K."/>
            <person name="Henrissat B."/>
            <person name="Hofmann G."/>
            <person name="Homan T."/>
            <person name="Horio T."/>
            <person name="Horiuchi H."/>
            <person name="James S."/>
            <person name="Jones M."/>
            <person name="Karaffa L."/>
            <person name="Karanyi Z."/>
            <person name="Kato M."/>
            <person name="Keller N."/>
            <person name="Kelly D.E."/>
            <person name="Kiel J.A."/>
            <person name="Kim J.M."/>
            <person name="van der Klei I.J."/>
            <person name="Klis F.M."/>
            <person name="Kovalchuk A."/>
            <person name="Krasevec N."/>
            <person name="Kubicek C.P."/>
            <person name="Liu B."/>
            <person name="Maccabe A."/>
            <person name="Meyer V."/>
            <person name="Mirabito P."/>
            <person name="Miskei M."/>
            <person name="Mos M."/>
            <person name="Mullins J."/>
            <person name="Nelson D.R."/>
            <person name="Nielsen J."/>
            <person name="Oakley B.R."/>
            <person name="Osmani S.A."/>
            <person name="Pakula T."/>
            <person name="Paszewski A."/>
            <person name="Paulsen I."/>
            <person name="Pilsyk S."/>
            <person name="Pocsi I."/>
            <person name="Punt P.J."/>
            <person name="Ram A.F."/>
            <person name="Ren Q."/>
            <person name="Robellet X."/>
            <person name="Robson G."/>
            <person name="Seiboth B."/>
            <person name="van Solingen P."/>
            <person name="Specht T."/>
            <person name="Sun J."/>
            <person name="Taheri-Talesh N."/>
            <person name="Takeshita N."/>
            <person name="Ussery D."/>
            <person name="vanKuyk P.A."/>
            <person name="Visser H."/>
            <person name="van de Vondervoort P.J."/>
            <person name="de Vries R.P."/>
            <person name="Walton J."/>
            <person name="Xiang X."/>
            <person name="Xiong Y."/>
            <person name="Zeng A.P."/>
            <person name="Brandt B.W."/>
            <person name="Cornell M.J."/>
            <person name="van den Hondel C.A."/>
            <person name="Visser J."/>
            <person name="Oliver S.G."/>
            <person name="Turner G."/>
        </authorList>
    </citation>
    <scope>GENOME REANNOTATION</scope>
    <source>
        <strain>FGSC A4 / ATCC 38163 / CBS 112.46 / NRRL 194 / M139</strain>
    </source>
</reference>
<name>GRRA_EMENI</name>
<accession>C8V4D4</accession>
<accession>Q15I80</accession>
<accession>Q5B5I0</accession>
<proteinExistence type="evidence at transcript level"/>
<gene>
    <name type="primary">grrA</name>
    <name type="synonym">grr1</name>
    <name type="ORF">AN10516</name>
</gene>
<dbReference type="EMBL" id="DQ309327">
    <property type="protein sequence ID" value="ABC25061.1"/>
    <property type="molecule type" value="Genomic_DNA"/>
</dbReference>
<dbReference type="EMBL" id="AACD01000068">
    <property type="protein sequence ID" value="EAA59299.1"/>
    <property type="status" value="ALT_SEQ"/>
    <property type="molecule type" value="Genomic_DNA"/>
</dbReference>
<dbReference type="EMBL" id="BN001302">
    <property type="protein sequence ID" value="CBF74496.1"/>
    <property type="molecule type" value="Genomic_DNA"/>
</dbReference>
<dbReference type="SMR" id="C8V4D4"/>
<dbReference type="STRING" id="227321.C8V4D4"/>
<dbReference type="EnsemblFungi" id="CBF74496">
    <property type="protein sequence ID" value="CBF74496"/>
    <property type="gene ID" value="ANIA_10516"/>
</dbReference>
<dbReference type="VEuPathDB" id="FungiDB:AN10516"/>
<dbReference type="eggNOG" id="KOG1947">
    <property type="taxonomic scope" value="Eukaryota"/>
</dbReference>
<dbReference type="HOGENOM" id="CLU_003436_0_0_1"/>
<dbReference type="InParanoid" id="C8V4D4"/>
<dbReference type="OMA" id="LCNRIRY"/>
<dbReference type="OrthoDB" id="10257471at2759"/>
<dbReference type="Proteomes" id="UP000000560">
    <property type="component" value="Chromosome II"/>
</dbReference>
<dbReference type="GO" id="GO:0005737">
    <property type="term" value="C:cytoplasm"/>
    <property type="evidence" value="ECO:0000318"/>
    <property type="project" value="GO_Central"/>
</dbReference>
<dbReference type="GO" id="GO:0019005">
    <property type="term" value="C:SCF ubiquitin ligase complex"/>
    <property type="evidence" value="ECO:0000316"/>
    <property type="project" value="AspGD"/>
</dbReference>
<dbReference type="GO" id="GO:0030437">
    <property type="term" value="P:ascospore formation"/>
    <property type="evidence" value="ECO:0000315"/>
    <property type="project" value="AspGD"/>
</dbReference>
<dbReference type="FunFam" id="3.80.10.10:FF:000251">
    <property type="entry name" value="Ubiquitin ligase complex F-box protein GRR1"/>
    <property type="match status" value="1"/>
</dbReference>
<dbReference type="FunFam" id="3.80.10.10:FF:000381">
    <property type="entry name" value="Ubiquitin ligase complex F-box protein GRR1"/>
    <property type="match status" value="1"/>
</dbReference>
<dbReference type="Gene3D" id="3.80.10.10">
    <property type="entry name" value="Ribonuclease Inhibitor"/>
    <property type="match status" value="3"/>
</dbReference>
<dbReference type="InterPro" id="IPR036047">
    <property type="entry name" value="F-box-like_dom_sf"/>
</dbReference>
<dbReference type="InterPro" id="IPR001810">
    <property type="entry name" value="F-box_dom"/>
</dbReference>
<dbReference type="InterPro" id="IPR050648">
    <property type="entry name" value="F-box_LRR-repeat"/>
</dbReference>
<dbReference type="InterPro" id="IPR001611">
    <property type="entry name" value="Leu-rich_rpt"/>
</dbReference>
<dbReference type="InterPro" id="IPR006553">
    <property type="entry name" value="Leu-rich_rpt_Cys-con_subtyp"/>
</dbReference>
<dbReference type="InterPro" id="IPR032675">
    <property type="entry name" value="LRR_dom_sf"/>
</dbReference>
<dbReference type="PANTHER" id="PTHR13382">
    <property type="entry name" value="MITOCHONDRIAL ATP SYNTHASE COUPLING FACTOR B"/>
    <property type="match status" value="1"/>
</dbReference>
<dbReference type="PANTHER" id="PTHR13382:SF67">
    <property type="entry name" value="SCF E3 UBIQUITIN LIGASE COMPLEX F-BOX PROTEIN POF2"/>
    <property type="match status" value="1"/>
</dbReference>
<dbReference type="Pfam" id="PF12937">
    <property type="entry name" value="F-box-like"/>
    <property type="match status" value="1"/>
</dbReference>
<dbReference type="Pfam" id="PF13516">
    <property type="entry name" value="LRR_6"/>
    <property type="match status" value="1"/>
</dbReference>
<dbReference type="SMART" id="SM00367">
    <property type="entry name" value="LRR_CC"/>
    <property type="match status" value="12"/>
</dbReference>
<dbReference type="SUPFAM" id="SSF81383">
    <property type="entry name" value="F-box domain"/>
    <property type="match status" value="1"/>
</dbReference>
<dbReference type="SUPFAM" id="SSF52047">
    <property type="entry name" value="RNI-like"/>
    <property type="match status" value="1"/>
</dbReference>
<sequence>MARSRQPTRFSSEAPSESSSSTSPERAADDDTDFFTLQANDSQSSIGAGNPRDSHIQNDPETVLPPIAYLPPEILISIFSKLSSPRDLLSCLLVCRIWALNCVGLLWHRPSCNNWDNLKKIAAAVGEEDSFFLYSSLIKRLNLSALTEDVSDGTVVPFSQCNRIERLTLTNCRKLTDIGVSDLVVGSRHLQALDVSELRSLTDHTLFKVAENCNRLQGLNITGCVKVTDDSLIAVSQNCRLLKRLKLNGVSQVTDKAILSFAQNCPSILEIDLQECKLVTNQSVTALMTTLQNLRELRLAHCTEIDDSAFLDLPRHIQMTSLRILDLTACENIRDEAVERIVSSAPRLRNLVLAKCKFITDRAVWAICKLGKNLHYVHLGHCSNINDSAVIQLVKSCNRIRYIDLACCSRLTDRSVQQLATLPKLRRIGLVKCQLITDASILALARPAQDHSVPCSSLERVHLSYCVNLTMVGIHALLNSCPRLTHLSLTGVAAFLREELTVFCREAPPEFTRQQREVFCVFSGEGVNRLRNHLNREAAPQRDANEATMYDDEEELDEDEGQVTGLMHAAAINDDDYINITPPHA</sequence>
<evidence type="ECO:0000250" key="1"/>
<evidence type="ECO:0000256" key="2">
    <source>
        <dbReference type="SAM" id="MobiDB-lite"/>
    </source>
</evidence>
<evidence type="ECO:0000269" key="3">
    <source>
    </source>
</evidence>
<evidence type="ECO:0000305" key="4"/>